<accession>B2SNS8</accession>
<organism>
    <name type="scientific">Xanthomonas oryzae pv. oryzae (strain PXO99A)</name>
    <dbReference type="NCBI Taxonomy" id="360094"/>
    <lineage>
        <taxon>Bacteria</taxon>
        <taxon>Pseudomonadati</taxon>
        <taxon>Pseudomonadota</taxon>
        <taxon>Gammaproteobacteria</taxon>
        <taxon>Lysobacterales</taxon>
        <taxon>Lysobacteraceae</taxon>
        <taxon>Xanthomonas</taxon>
    </lineage>
</organism>
<feature type="chain" id="PRO_1000116016" description="Probable GTP-binding protein EngB">
    <location>
        <begin position="1"/>
        <end position="207"/>
    </location>
</feature>
<feature type="domain" description="EngB-type G" evidence="1">
    <location>
        <begin position="24"/>
        <end position="199"/>
    </location>
</feature>
<feature type="binding site" evidence="1">
    <location>
        <begin position="32"/>
        <end position="39"/>
    </location>
    <ligand>
        <name>GTP</name>
        <dbReference type="ChEBI" id="CHEBI:37565"/>
    </ligand>
</feature>
<feature type="binding site" evidence="1">
    <location>
        <position position="39"/>
    </location>
    <ligand>
        <name>Mg(2+)</name>
        <dbReference type="ChEBI" id="CHEBI:18420"/>
    </ligand>
</feature>
<feature type="binding site" evidence="1">
    <location>
        <begin position="59"/>
        <end position="63"/>
    </location>
    <ligand>
        <name>GTP</name>
        <dbReference type="ChEBI" id="CHEBI:37565"/>
    </ligand>
</feature>
<feature type="binding site" evidence="1">
    <location>
        <position position="61"/>
    </location>
    <ligand>
        <name>Mg(2+)</name>
        <dbReference type="ChEBI" id="CHEBI:18420"/>
    </ligand>
</feature>
<feature type="binding site" evidence="1">
    <location>
        <begin position="77"/>
        <end position="80"/>
    </location>
    <ligand>
        <name>GTP</name>
        <dbReference type="ChEBI" id="CHEBI:37565"/>
    </ligand>
</feature>
<feature type="binding site" evidence="1">
    <location>
        <begin position="144"/>
        <end position="147"/>
    </location>
    <ligand>
        <name>GTP</name>
        <dbReference type="ChEBI" id="CHEBI:37565"/>
    </ligand>
</feature>
<feature type="binding site" evidence="1">
    <location>
        <begin position="178"/>
        <end position="180"/>
    </location>
    <ligand>
        <name>GTP</name>
        <dbReference type="ChEBI" id="CHEBI:37565"/>
    </ligand>
</feature>
<gene>
    <name evidence="1" type="primary">engB</name>
    <name type="ordered locus">PXO_04431</name>
</gene>
<sequence length="207" mass="23105">MSLLIEQARYHLSAHNARQLPDDGGYEVAFAGRSNAGKSSALNALTRQNALARVSKTPGRTQQLVFFQIQPERYLVDLPGYGYAKVPQDLQAHWQAFIDRYFRTREALRGLVVVMDIRHPLKDYDLQMLGYAAERGLPAHGLLTKADKLGRGQQMQTLQKVKKEVTSRFGDSVTVQTYSGQSRQGVDELRGIVGGWLGLIAEPLAEH</sequence>
<keyword id="KW-0131">Cell cycle</keyword>
<keyword id="KW-0132">Cell division</keyword>
<keyword id="KW-0342">GTP-binding</keyword>
<keyword id="KW-0460">Magnesium</keyword>
<keyword id="KW-0479">Metal-binding</keyword>
<keyword id="KW-0547">Nucleotide-binding</keyword>
<keyword id="KW-0717">Septation</keyword>
<protein>
    <recommendedName>
        <fullName evidence="1">Probable GTP-binding protein EngB</fullName>
    </recommendedName>
</protein>
<proteinExistence type="inferred from homology"/>
<evidence type="ECO:0000255" key="1">
    <source>
        <dbReference type="HAMAP-Rule" id="MF_00321"/>
    </source>
</evidence>
<reference key="1">
    <citation type="journal article" date="2008" name="BMC Genomics">
        <title>Genome sequence and rapid evolution of the rice pathogen Xanthomonas oryzae pv. oryzae PXO99A.</title>
        <authorList>
            <person name="Salzberg S.L."/>
            <person name="Sommer D.D."/>
            <person name="Schatz M.C."/>
            <person name="Phillippy A.M."/>
            <person name="Rabinowicz P.D."/>
            <person name="Tsuge S."/>
            <person name="Furutani A."/>
            <person name="Ochiai H."/>
            <person name="Delcher A.L."/>
            <person name="Kelley D."/>
            <person name="Madupu R."/>
            <person name="Puiu D."/>
            <person name="Radune D."/>
            <person name="Shumway M."/>
            <person name="Trapnell C."/>
            <person name="Aparna G."/>
            <person name="Jha G."/>
            <person name="Pandey A."/>
            <person name="Patil P.B."/>
            <person name="Ishihara H."/>
            <person name="Meyer D.F."/>
            <person name="Szurek B."/>
            <person name="Verdier V."/>
            <person name="Koebnik R."/>
            <person name="Dow J.M."/>
            <person name="Ryan R.P."/>
            <person name="Hirata H."/>
            <person name="Tsuyumu S."/>
            <person name="Won Lee S."/>
            <person name="Seo Y.-S."/>
            <person name="Sriariyanum M."/>
            <person name="Ronald P.C."/>
            <person name="Sonti R.V."/>
            <person name="Van Sluys M.-A."/>
            <person name="Leach J.E."/>
            <person name="White F.F."/>
            <person name="Bogdanove A.J."/>
        </authorList>
    </citation>
    <scope>NUCLEOTIDE SEQUENCE [LARGE SCALE GENOMIC DNA]</scope>
    <source>
        <strain>PXO99A</strain>
    </source>
</reference>
<comment type="function">
    <text evidence="1">Necessary for normal cell division and for the maintenance of normal septation.</text>
</comment>
<comment type="cofactor">
    <cofactor evidence="1">
        <name>Mg(2+)</name>
        <dbReference type="ChEBI" id="CHEBI:18420"/>
    </cofactor>
</comment>
<comment type="similarity">
    <text evidence="1">Belongs to the TRAFAC class TrmE-Era-EngA-EngB-Septin-like GTPase superfamily. EngB GTPase family.</text>
</comment>
<name>ENGB_XANOP</name>
<dbReference type="EMBL" id="CP000967">
    <property type="protein sequence ID" value="ACD57629.1"/>
    <property type="molecule type" value="Genomic_DNA"/>
</dbReference>
<dbReference type="SMR" id="B2SNS8"/>
<dbReference type="KEGG" id="xop:PXO_04431"/>
<dbReference type="eggNOG" id="COG0218">
    <property type="taxonomic scope" value="Bacteria"/>
</dbReference>
<dbReference type="HOGENOM" id="CLU_033732_1_0_6"/>
<dbReference type="Proteomes" id="UP000001740">
    <property type="component" value="Chromosome"/>
</dbReference>
<dbReference type="GO" id="GO:0005829">
    <property type="term" value="C:cytosol"/>
    <property type="evidence" value="ECO:0007669"/>
    <property type="project" value="TreeGrafter"/>
</dbReference>
<dbReference type="GO" id="GO:0005525">
    <property type="term" value="F:GTP binding"/>
    <property type="evidence" value="ECO:0007669"/>
    <property type="project" value="UniProtKB-UniRule"/>
</dbReference>
<dbReference type="GO" id="GO:0046872">
    <property type="term" value="F:metal ion binding"/>
    <property type="evidence" value="ECO:0007669"/>
    <property type="project" value="UniProtKB-KW"/>
</dbReference>
<dbReference type="GO" id="GO:0000917">
    <property type="term" value="P:division septum assembly"/>
    <property type="evidence" value="ECO:0007669"/>
    <property type="project" value="UniProtKB-KW"/>
</dbReference>
<dbReference type="CDD" id="cd01876">
    <property type="entry name" value="YihA_EngB"/>
    <property type="match status" value="1"/>
</dbReference>
<dbReference type="FunFam" id="3.40.50.300:FF:000098">
    <property type="entry name" value="Probable GTP-binding protein EngB"/>
    <property type="match status" value="1"/>
</dbReference>
<dbReference type="Gene3D" id="3.40.50.300">
    <property type="entry name" value="P-loop containing nucleotide triphosphate hydrolases"/>
    <property type="match status" value="1"/>
</dbReference>
<dbReference type="HAMAP" id="MF_00321">
    <property type="entry name" value="GTPase_EngB"/>
    <property type="match status" value="1"/>
</dbReference>
<dbReference type="InterPro" id="IPR030393">
    <property type="entry name" value="G_ENGB_dom"/>
</dbReference>
<dbReference type="InterPro" id="IPR006073">
    <property type="entry name" value="GTP-bd"/>
</dbReference>
<dbReference type="InterPro" id="IPR019987">
    <property type="entry name" value="GTP-bd_ribosome_bio_YsxC"/>
</dbReference>
<dbReference type="InterPro" id="IPR027417">
    <property type="entry name" value="P-loop_NTPase"/>
</dbReference>
<dbReference type="NCBIfam" id="TIGR03598">
    <property type="entry name" value="GTPase_YsxC"/>
    <property type="match status" value="1"/>
</dbReference>
<dbReference type="PANTHER" id="PTHR11649:SF13">
    <property type="entry name" value="ENGB-TYPE G DOMAIN-CONTAINING PROTEIN"/>
    <property type="match status" value="1"/>
</dbReference>
<dbReference type="PANTHER" id="PTHR11649">
    <property type="entry name" value="MSS1/TRME-RELATED GTP-BINDING PROTEIN"/>
    <property type="match status" value="1"/>
</dbReference>
<dbReference type="Pfam" id="PF01926">
    <property type="entry name" value="MMR_HSR1"/>
    <property type="match status" value="1"/>
</dbReference>
<dbReference type="SUPFAM" id="SSF52540">
    <property type="entry name" value="P-loop containing nucleoside triphosphate hydrolases"/>
    <property type="match status" value="1"/>
</dbReference>
<dbReference type="PROSITE" id="PS51706">
    <property type="entry name" value="G_ENGB"/>
    <property type="match status" value="1"/>
</dbReference>